<name>PTAS_CORGL</name>
<gene>
    <name type="primary">pta</name>
    <name type="ordered locus">Cgl2753</name>
    <name type="ordered locus">cg3048</name>
</gene>
<dbReference type="EC" id="2.3.1.8"/>
<dbReference type="EMBL" id="X89084">
    <property type="protein sequence ID" value="CAA61455.1"/>
    <property type="molecule type" value="Genomic_DNA"/>
</dbReference>
<dbReference type="EMBL" id="BA000036">
    <property type="protein sequence ID" value="BAC00147.1"/>
    <property type="molecule type" value="Genomic_DNA"/>
</dbReference>
<dbReference type="EMBL" id="BX927156">
    <property type="protein sequence ID" value="CAF20775.1"/>
    <property type="status" value="ALT_INIT"/>
    <property type="molecule type" value="Genomic_DNA"/>
</dbReference>
<dbReference type="RefSeq" id="NP_601948.1">
    <property type="nucleotide sequence ID" value="NC_003450.3"/>
</dbReference>
<dbReference type="SMR" id="P77844"/>
<dbReference type="STRING" id="196627.cg3048"/>
<dbReference type="KEGG" id="cgb:cg3048"/>
<dbReference type="KEGG" id="cgl:Cgl2753"/>
<dbReference type="PATRIC" id="fig|196627.13.peg.2684"/>
<dbReference type="eggNOG" id="COG0280">
    <property type="taxonomic scope" value="Bacteria"/>
</dbReference>
<dbReference type="HOGENOM" id="CLU_019723_0_1_11"/>
<dbReference type="OrthoDB" id="9808984at2"/>
<dbReference type="BioCyc" id="CORYNE:G18NG-12370-MONOMER"/>
<dbReference type="UniPathway" id="UPA00340">
    <property type="reaction ID" value="UER00459"/>
</dbReference>
<dbReference type="Proteomes" id="UP000000582">
    <property type="component" value="Chromosome"/>
</dbReference>
<dbReference type="Proteomes" id="UP000001009">
    <property type="component" value="Chromosome"/>
</dbReference>
<dbReference type="GO" id="GO:0005737">
    <property type="term" value="C:cytoplasm"/>
    <property type="evidence" value="ECO:0007669"/>
    <property type="project" value="UniProtKB-SubCell"/>
</dbReference>
<dbReference type="GO" id="GO:0008959">
    <property type="term" value="F:phosphate acetyltransferase activity"/>
    <property type="evidence" value="ECO:0007669"/>
    <property type="project" value="UniProtKB-EC"/>
</dbReference>
<dbReference type="GO" id="GO:0006085">
    <property type="term" value="P:acetyl-CoA biosynthetic process"/>
    <property type="evidence" value="ECO:0007669"/>
    <property type="project" value="UniProtKB-UniPathway"/>
</dbReference>
<dbReference type="Gene3D" id="3.40.50.10950">
    <property type="match status" value="1"/>
</dbReference>
<dbReference type="Gene3D" id="3.40.50.10750">
    <property type="entry name" value="Isocitrate/Isopropylmalate dehydrogenase-like"/>
    <property type="match status" value="1"/>
</dbReference>
<dbReference type="InterPro" id="IPR012147">
    <property type="entry name" value="P_Ac_Bu_trans"/>
</dbReference>
<dbReference type="InterPro" id="IPR004614">
    <property type="entry name" value="P_AcTrfase"/>
</dbReference>
<dbReference type="InterPro" id="IPR042113">
    <property type="entry name" value="P_AcTrfase_dom1"/>
</dbReference>
<dbReference type="InterPro" id="IPR042112">
    <property type="entry name" value="P_AcTrfase_dom2"/>
</dbReference>
<dbReference type="InterPro" id="IPR050500">
    <property type="entry name" value="Phos_Acetyltrans/Butyryltrans"/>
</dbReference>
<dbReference type="InterPro" id="IPR002505">
    <property type="entry name" value="PTA_PTB"/>
</dbReference>
<dbReference type="NCBIfam" id="NF004167">
    <property type="entry name" value="PRK05632.1"/>
    <property type="match status" value="1"/>
</dbReference>
<dbReference type="NCBIfam" id="NF007233">
    <property type="entry name" value="PRK09653.1"/>
    <property type="match status" value="1"/>
</dbReference>
<dbReference type="NCBIfam" id="TIGR00651">
    <property type="entry name" value="pta"/>
    <property type="match status" value="1"/>
</dbReference>
<dbReference type="PANTHER" id="PTHR43356">
    <property type="entry name" value="PHOSPHATE ACETYLTRANSFERASE"/>
    <property type="match status" value="1"/>
</dbReference>
<dbReference type="PANTHER" id="PTHR43356:SF3">
    <property type="entry name" value="PHOSPHATE ACETYLTRANSFERASE"/>
    <property type="match status" value="1"/>
</dbReference>
<dbReference type="Pfam" id="PF01515">
    <property type="entry name" value="PTA_PTB"/>
    <property type="match status" value="1"/>
</dbReference>
<dbReference type="PIRSF" id="PIRSF000428">
    <property type="entry name" value="P_Ac_trans"/>
    <property type="match status" value="1"/>
</dbReference>
<dbReference type="SUPFAM" id="SSF53659">
    <property type="entry name" value="Isocitrate/Isopropylmalate dehydrogenase-like"/>
    <property type="match status" value="1"/>
</dbReference>
<comment type="catalytic activity">
    <reaction>
        <text>acetyl-CoA + phosphate = acetyl phosphate + CoA</text>
        <dbReference type="Rhea" id="RHEA:19521"/>
        <dbReference type="ChEBI" id="CHEBI:22191"/>
        <dbReference type="ChEBI" id="CHEBI:43474"/>
        <dbReference type="ChEBI" id="CHEBI:57287"/>
        <dbReference type="ChEBI" id="CHEBI:57288"/>
        <dbReference type="EC" id="2.3.1.8"/>
    </reaction>
</comment>
<comment type="pathway">
    <text>Metabolic intermediate biosynthesis; acetyl-CoA biosynthesis; acetyl-CoA from acetate: step 2/2.</text>
</comment>
<comment type="subcellular location">
    <subcellularLocation>
        <location evidence="4">Cytoplasm</location>
    </subcellularLocation>
</comment>
<comment type="induction">
    <text evidence="1 2 3">Activated by RamA and repressed by RipA and RamB.</text>
</comment>
<comment type="similarity">
    <text evidence="4">Belongs to the phosphate acetyltransferase and butyryltransferase family.</text>
</comment>
<comment type="sequence caution" evidence="4">
    <conflict type="erroneous initiation">
        <sequence resource="EMBL-CDS" id="CAF20775"/>
    </conflict>
</comment>
<accession>P77844</accession>
<keyword id="KW-0012">Acyltransferase</keyword>
<keyword id="KW-0963">Cytoplasm</keyword>
<keyword id="KW-1185">Reference proteome</keyword>
<keyword id="KW-0808">Transferase</keyword>
<feature type="chain" id="PRO_0000179128" description="Phosphate acetyltransferase">
    <location>
        <begin position="1"/>
        <end position="329"/>
    </location>
</feature>
<protein>
    <recommendedName>
        <fullName>Phosphate acetyltransferase</fullName>
        <ecNumber>2.3.1.8</ecNumber>
    </recommendedName>
    <alternativeName>
        <fullName>Phosphotransacetylase</fullName>
    </alternativeName>
</protein>
<sequence>MSAELFENWLLKRARAEHSHIVLPEGDDDRILMAAHQLLDQDICDITILGDPVKIKERATELGLHLNTAYLVNPLTDPRLEEFAEQFAELRKSKSVTIDEAREIMKDISYFGTMMVHNGDADGMVSGAANTTAHTIKPSFQIIKTVPEASVVSSIFLMVLRGRLWAFGDCAVNPNPTAEQLGEIAVVSAKTAAQFGIDPRVAILSYSTGNSGGGSDVDRAIDALAEARRLNPELCVDGPLQFDAAVDPGVARKKMPDSDVAGQANVFIFPDLEAGNIGYKTAQRTGHALAVGPILQGLNKPVNDLSRGATVPDIVNTVAITAIQAGGRS</sequence>
<proteinExistence type="evidence at transcript level"/>
<organism>
    <name type="scientific">Corynebacterium glutamicum (strain ATCC 13032 / DSM 20300 / JCM 1318 / BCRC 11384 / CCUG 27702 / LMG 3730 / NBRC 12168 / NCIMB 10025 / NRRL B-2784 / 534)</name>
    <dbReference type="NCBI Taxonomy" id="196627"/>
    <lineage>
        <taxon>Bacteria</taxon>
        <taxon>Bacillati</taxon>
        <taxon>Actinomycetota</taxon>
        <taxon>Actinomycetes</taxon>
        <taxon>Mycobacteriales</taxon>
        <taxon>Corynebacteriaceae</taxon>
        <taxon>Corynebacterium</taxon>
    </lineage>
</organism>
<reference key="1">
    <citation type="journal article" date="1999" name="Microbiology">
        <title>Cloning, sequence analysis, expression and inactivation of the Corynebacterium glutamicum pta-ack operon encoding phosphotransacetylase and acetate kinase.</title>
        <authorList>
            <person name="Reinscheid D.J."/>
            <person name="Schnicke S."/>
            <person name="Rittmann D."/>
            <person name="Zahnow U."/>
            <person name="Sahm H."/>
            <person name="Eikmanns B.J."/>
        </authorList>
    </citation>
    <scope>NUCLEOTIDE SEQUENCE [GENOMIC DNA]</scope>
    <source>
        <strain>ATCC 13032 / DSM 20300 / JCM 1318 / BCRC 11384 / CCUG 27702 / LMG 3730 / NBRC 12168 / NCIMB 10025 / NRRL B-2784 / 534</strain>
    </source>
</reference>
<reference key="2">
    <citation type="journal article" date="2003" name="Appl. Microbiol. Biotechnol.">
        <title>The Corynebacterium glutamicum genome: features and impacts on biotechnological processes.</title>
        <authorList>
            <person name="Ikeda M."/>
            <person name="Nakagawa S."/>
        </authorList>
    </citation>
    <scope>NUCLEOTIDE SEQUENCE [LARGE SCALE GENOMIC DNA]</scope>
    <source>
        <strain>ATCC 13032 / DSM 20300 / JCM 1318 / BCRC 11384 / CCUG 27702 / LMG 3730 / NBRC 12168 / NCIMB 10025 / NRRL B-2784 / 534</strain>
    </source>
</reference>
<reference key="3">
    <citation type="journal article" date="2003" name="J. Biotechnol.">
        <title>The complete Corynebacterium glutamicum ATCC 13032 genome sequence and its impact on the production of L-aspartate-derived amino acids and vitamins.</title>
        <authorList>
            <person name="Kalinowski J."/>
            <person name="Bathe B."/>
            <person name="Bartels D."/>
            <person name="Bischoff N."/>
            <person name="Bott M."/>
            <person name="Burkovski A."/>
            <person name="Dusch N."/>
            <person name="Eggeling L."/>
            <person name="Eikmanns B.J."/>
            <person name="Gaigalat L."/>
            <person name="Goesmann A."/>
            <person name="Hartmann M."/>
            <person name="Huthmacher K."/>
            <person name="Kraemer R."/>
            <person name="Linke B."/>
            <person name="McHardy A.C."/>
            <person name="Meyer F."/>
            <person name="Moeckel B."/>
            <person name="Pfefferle W."/>
            <person name="Puehler A."/>
            <person name="Rey D.A."/>
            <person name="Rueckert C."/>
            <person name="Rupp O."/>
            <person name="Sahm H."/>
            <person name="Wendisch V.F."/>
            <person name="Wiegraebe I."/>
            <person name="Tauch A."/>
        </authorList>
    </citation>
    <scope>NUCLEOTIDE SEQUENCE [LARGE SCALE GENOMIC DNA]</scope>
    <source>
        <strain>ATCC 13032 / DSM 20300 / JCM 1318 / BCRC 11384 / CCUG 27702 / LMG 3730 / NBRC 12168 / NCIMB 10025 / NRRL B-2784 / 534</strain>
    </source>
</reference>
<reference key="4">
    <citation type="journal article" date="2004" name="J. Bacteriol.">
        <title>RamB, a novel transcriptional regulator of genes involved in acetate metabolism of Corynebacterium glutamicum.</title>
        <authorList>
            <person name="Gerstmeir R."/>
            <person name="Cramer A."/>
            <person name="Dangel P."/>
            <person name="Schaffer S."/>
            <person name="Eikmanns B.J."/>
        </authorList>
    </citation>
    <scope>INDUCTION</scope>
    <source>
        <strain>ATCC 13032 / DSM 20300 / JCM 1318 / BCRC 11384 / CCUG 27702 / LMG 3730 / NBRC 12168 / NCIMB 10025 / NRRL B-2784 / 534</strain>
    </source>
</reference>
<reference key="5">
    <citation type="journal article" date="2005" name="J. Biol. Chem.">
        <title>The AraC-type regulator RipA represses aconitase and other iron proteins from Corynebacterium under iron limitation and is itself repressed by DtxR.</title>
        <authorList>
            <person name="Wennerhold J."/>
            <person name="Krug A."/>
            <person name="Bott M."/>
        </authorList>
    </citation>
    <scope>INDUCTION</scope>
    <source>
        <strain>ATCC 13032 / DSM 20300 / JCM 1318 / BCRC 11384 / CCUG 27702 / LMG 3730 / NBRC 12168 / NCIMB 10025 / NRRL B-2784 / 534</strain>
    </source>
</reference>
<reference key="6">
    <citation type="journal article" date="2006" name="J. Bacteriol.">
        <title>Identification of RamA, a novel LuxR-type transcriptional regulator of genes involved in acetate metabolism of Corynebacterium glutamicum.</title>
        <authorList>
            <person name="Cramer A."/>
            <person name="Gerstmeir R."/>
            <person name="Schaffer S."/>
            <person name="Bott M."/>
            <person name="Eikmanns B.J."/>
        </authorList>
    </citation>
    <scope>INDUCTION</scope>
    <source>
        <strain>ATCC 13032 / DSM 20300 / JCM 1318 / BCRC 11384 / CCUG 27702 / LMG 3730 / NBRC 12168 / NCIMB 10025 / NRRL B-2784 / 534</strain>
    </source>
</reference>
<evidence type="ECO:0000269" key="1">
    <source>
    </source>
</evidence>
<evidence type="ECO:0000269" key="2">
    <source>
    </source>
</evidence>
<evidence type="ECO:0000269" key="3">
    <source>
    </source>
</evidence>
<evidence type="ECO:0000305" key="4"/>